<protein>
    <recommendedName>
        <fullName evidence="1">Photosystem II assembly lipoprotein Ycf48</fullName>
    </recommendedName>
</protein>
<organism>
    <name type="scientific">Prochlorococcus marinus (strain NATL2A)</name>
    <dbReference type="NCBI Taxonomy" id="59920"/>
    <lineage>
        <taxon>Bacteria</taxon>
        <taxon>Bacillati</taxon>
        <taxon>Cyanobacteriota</taxon>
        <taxon>Cyanophyceae</taxon>
        <taxon>Synechococcales</taxon>
        <taxon>Prochlorococcaceae</taxon>
        <taxon>Prochlorococcus</taxon>
    </lineage>
</organism>
<sequence length="338" mass="36859">MKRLFSNVINLTLVLIVGVALSGCTVSNASIGSSSPWSLVDLDTEANPLDVDFVDDKNGFLVGTNRLILETNDGGITWKERNLDIPSEGNFRLISVDFKGQEGWIAGQPGLILHTTDGGKNWTRLDLGNKLPGDPYLITTIDTDIAELATTAGAIYKTTDAGTNWEAIVVDTSGSGGIRELRRTNNGGYISVSSLGNFFSVLRPGEEIWSPHQRASSKRVQSVGEQPNGDLWMLSRGAEIRFNADPDDIDSWSKPIIPIVNGYNYQDLVWDPSKSIWAAGGNGTLLVSNDEGKTWEKDPVGESVPTNFIRILFLDDLNSESPKGFVFGERGNLLRWQG</sequence>
<feature type="signal peptide" evidence="1">
    <location>
        <begin position="1"/>
        <end position="23"/>
    </location>
</feature>
<feature type="chain" id="PRO_0000239678" description="Photosystem II assembly lipoprotein Ycf48" evidence="1">
    <location>
        <begin position="24"/>
        <end position="338"/>
    </location>
</feature>
<feature type="lipid moiety-binding region" description="N-palmitoyl cysteine" evidence="1">
    <location>
        <position position="24"/>
    </location>
</feature>
<feature type="lipid moiety-binding region" description="S-diacylglycerol cysteine" evidence="1">
    <location>
        <position position="24"/>
    </location>
</feature>
<accession>Q46M02</accession>
<reference key="1">
    <citation type="journal article" date="2007" name="PLoS Genet.">
        <title>Patterns and implications of gene gain and loss in the evolution of Prochlorococcus.</title>
        <authorList>
            <person name="Kettler G.C."/>
            <person name="Martiny A.C."/>
            <person name="Huang K."/>
            <person name="Zucker J."/>
            <person name="Coleman M.L."/>
            <person name="Rodrigue S."/>
            <person name="Chen F."/>
            <person name="Lapidus A."/>
            <person name="Ferriera S."/>
            <person name="Johnson J."/>
            <person name="Steglich C."/>
            <person name="Church G.M."/>
            <person name="Richardson P."/>
            <person name="Chisholm S.W."/>
        </authorList>
    </citation>
    <scope>NUCLEOTIDE SEQUENCE [LARGE SCALE GENOMIC DNA]</scope>
    <source>
        <strain>NATL2A</strain>
    </source>
</reference>
<gene>
    <name evidence="1" type="primary">ycf48</name>
    <name type="ordered locus">PMN2A_1662</name>
</gene>
<evidence type="ECO:0000255" key="1">
    <source>
        <dbReference type="HAMAP-Rule" id="MF_01348"/>
    </source>
</evidence>
<keyword id="KW-0449">Lipoprotein</keyword>
<keyword id="KW-0472">Membrane</keyword>
<keyword id="KW-0564">Palmitate</keyword>
<keyword id="KW-0602">Photosynthesis</keyword>
<keyword id="KW-0604">Photosystem II</keyword>
<keyword id="KW-1185">Reference proteome</keyword>
<keyword id="KW-0732">Signal</keyword>
<keyword id="KW-0793">Thylakoid</keyword>
<name>YCF48_PROMT</name>
<dbReference type="EMBL" id="CP000095">
    <property type="protein sequence ID" value="AAZ59150.1"/>
    <property type="molecule type" value="Genomic_DNA"/>
</dbReference>
<dbReference type="RefSeq" id="WP_011294295.1">
    <property type="nucleotide sequence ID" value="NC_007335.2"/>
</dbReference>
<dbReference type="SMR" id="Q46M02"/>
<dbReference type="STRING" id="59920.PMN2A_1662"/>
<dbReference type="KEGG" id="pmn:PMN2A_1662"/>
<dbReference type="HOGENOM" id="CLU_057027_0_0_3"/>
<dbReference type="OrthoDB" id="9813892at2"/>
<dbReference type="PhylomeDB" id="Q46M02"/>
<dbReference type="Proteomes" id="UP000002535">
    <property type="component" value="Chromosome"/>
</dbReference>
<dbReference type="GO" id="GO:0009523">
    <property type="term" value="C:photosystem II"/>
    <property type="evidence" value="ECO:0007669"/>
    <property type="project" value="UniProtKB-KW"/>
</dbReference>
<dbReference type="GO" id="GO:0031676">
    <property type="term" value="C:plasma membrane-derived thylakoid membrane"/>
    <property type="evidence" value="ECO:0007669"/>
    <property type="project" value="UniProtKB-SubCell"/>
</dbReference>
<dbReference type="GO" id="GO:0031977">
    <property type="term" value="C:thylakoid lumen"/>
    <property type="evidence" value="ECO:0007669"/>
    <property type="project" value="UniProtKB-UniRule"/>
</dbReference>
<dbReference type="GO" id="GO:0015979">
    <property type="term" value="P:photosynthesis"/>
    <property type="evidence" value="ECO:0007669"/>
    <property type="project" value="UniProtKB-KW"/>
</dbReference>
<dbReference type="Gene3D" id="2.130.10.10">
    <property type="entry name" value="YVTN repeat-like/Quinoprotein amine dehydrogenase"/>
    <property type="match status" value="1"/>
</dbReference>
<dbReference type="HAMAP" id="MF_01348">
    <property type="entry name" value="Ycf48"/>
    <property type="match status" value="1"/>
</dbReference>
<dbReference type="InterPro" id="IPR028203">
    <property type="entry name" value="PSII_CF48-like_dom"/>
</dbReference>
<dbReference type="InterPro" id="IPR015943">
    <property type="entry name" value="WD40/YVTN_repeat-like_dom_sf"/>
</dbReference>
<dbReference type="InterPro" id="IPR016705">
    <property type="entry name" value="Ycf48/Hcf136"/>
</dbReference>
<dbReference type="NCBIfam" id="NF010237">
    <property type="entry name" value="PRK13684.1"/>
    <property type="match status" value="1"/>
</dbReference>
<dbReference type="PANTHER" id="PTHR47199">
    <property type="entry name" value="PHOTOSYSTEM II STABILITY/ASSEMBLY FACTOR HCF136, CHLOROPLASTIC"/>
    <property type="match status" value="1"/>
</dbReference>
<dbReference type="PANTHER" id="PTHR47199:SF2">
    <property type="entry name" value="PHOTOSYSTEM II STABILITY_ASSEMBLY FACTOR HCF136, CHLOROPLASTIC"/>
    <property type="match status" value="1"/>
</dbReference>
<dbReference type="Pfam" id="PF14870">
    <property type="entry name" value="PSII_BNR"/>
    <property type="match status" value="1"/>
</dbReference>
<dbReference type="PIRSF" id="PIRSF017875">
    <property type="entry name" value="PSII_HCF136"/>
    <property type="match status" value="1"/>
</dbReference>
<dbReference type="SUPFAM" id="SSF110296">
    <property type="entry name" value="Oligoxyloglucan reducing end-specific cellobiohydrolase"/>
    <property type="match status" value="1"/>
</dbReference>
<dbReference type="PROSITE" id="PS51257">
    <property type="entry name" value="PROKAR_LIPOPROTEIN"/>
    <property type="match status" value="1"/>
</dbReference>
<comment type="function">
    <text evidence="1">A factor required for optimal assembly of photosystem II (PSII), acting in the early stages of PSII assembly. Also plays a role in replacement of photodamaged D1 (psbA). Assists YidC in synthesis of chlorophyll-binding proteins.</text>
</comment>
<comment type="subunit">
    <text evidence="1">Part of early PSII assembly complexes which includes D1 (psbA) and PsbI; not found in mature PSII. Binds to the lumenal side of PSII complexes. Interacts with YidC.</text>
</comment>
<comment type="subcellular location">
    <subcellularLocation>
        <location evidence="1">Cellular thylakoid membrane</location>
        <topology evidence="1">Lipid-anchor</topology>
        <orientation evidence="1">Lumenal side</orientation>
    </subcellularLocation>
    <text evidence="1">Associated with a PSII precusor complex on the lumenal side of the thylakoid membrane.</text>
</comment>
<comment type="domain">
    <text evidence="1">A 7-bladed beta-propeller torus, about 55 by 55 Angstroms, with a depth of about 25 Angstroms and a central pore.</text>
</comment>
<comment type="similarity">
    <text evidence="1">Belongs to the Ycf48 family.</text>
</comment>
<proteinExistence type="inferred from homology"/>